<sequence>MKALSKLKAEEGIWMTDVPEPELGHNDLLIKIRKTAICGTDVHIYNWDEWSQKTIPVPMVVGHEYVGEVVGIGQEVKGFKIGDRVSGEGHITCGHCRNCRAGRTHLCRNTIGVGVNRPGCFAEYLVIPAFNAFKIPDNISDDLASIFDPFGNAVHTALSFDLVGEDVLVSGAGPIGIMAAAVAKHVGARNVVITDVNEYRLELARKMGITRAVNVAKENLEDVMAELGMTEGFDVGLEMSGAPAAFRTMLDTMNHGGRIAMLGIPPSDMSIDWTKVIFKGLFIKGIYGREMFETWYKMAALIQSGLDLSPIITHRFSIDDFQKGFDAMRSGQSGKVILSWD</sequence>
<protein>
    <recommendedName>
        <fullName evidence="1">L-threonine 3-dehydrogenase</fullName>
        <shortName evidence="1">TDH</shortName>
        <ecNumber evidence="1">1.1.1.103</ecNumber>
    </recommendedName>
</protein>
<accession>B7LVH6</accession>
<organism>
    <name type="scientific">Escherichia fergusonii (strain ATCC 35469 / DSM 13698 / CCUG 18766 / IAM 14443 / JCM 21226 / LMG 7866 / NBRC 102419 / NCTC 12128 / CDC 0568-73)</name>
    <dbReference type="NCBI Taxonomy" id="585054"/>
    <lineage>
        <taxon>Bacteria</taxon>
        <taxon>Pseudomonadati</taxon>
        <taxon>Pseudomonadota</taxon>
        <taxon>Gammaproteobacteria</taxon>
        <taxon>Enterobacterales</taxon>
        <taxon>Enterobacteriaceae</taxon>
        <taxon>Escherichia</taxon>
    </lineage>
</organism>
<name>TDH_ESCF3</name>
<proteinExistence type="inferred from homology"/>
<reference key="1">
    <citation type="journal article" date="2009" name="PLoS Genet.">
        <title>Organised genome dynamics in the Escherichia coli species results in highly diverse adaptive paths.</title>
        <authorList>
            <person name="Touchon M."/>
            <person name="Hoede C."/>
            <person name="Tenaillon O."/>
            <person name="Barbe V."/>
            <person name="Baeriswyl S."/>
            <person name="Bidet P."/>
            <person name="Bingen E."/>
            <person name="Bonacorsi S."/>
            <person name="Bouchier C."/>
            <person name="Bouvet O."/>
            <person name="Calteau A."/>
            <person name="Chiapello H."/>
            <person name="Clermont O."/>
            <person name="Cruveiller S."/>
            <person name="Danchin A."/>
            <person name="Diard M."/>
            <person name="Dossat C."/>
            <person name="Karoui M.E."/>
            <person name="Frapy E."/>
            <person name="Garry L."/>
            <person name="Ghigo J.M."/>
            <person name="Gilles A.M."/>
            <person name="Johnson J."/>
            <person name="Le Bouguenec C."/>
            <person name="Lescat M."/>
            <person name="Mangenot S."/>
            <person name="Martinez-Jehanne V."/>
            <person name="Matic I."/>
            <person name="Nassif X."/>
            <person name="Oztas S."/>
            <person name="Petit M.A."/>
            <person name="Pichon C."/>
            <person name="Rouy Z."/>
            <person name="Ruf C.S."/>
            <person name="Schneider D."/>
            <person name="Tourret J."/>
            <person name="Vacherie B."/>
            <person name="Vallenet D."/>
            <person name="Medigue C."/>
            <person name="Rocha E.P.C."/>
            <person name="Denamur E."/>
        </authorList>
    </citation>
    <scope>NUCLEOTIDE SEQUENCE [LARGE SCALE GENOMIC DNA]</scope>
    <source>
        <strain>ATCC 35469 / DSM 13698 / BCRC 15582 / CCUG 18766 / IAM 14443 / JCM 21226 / LMG 7866 / NBRC 102419 / NCTC 12128 / CDC 0568-73</strain>
    </source>
</reference>
<feature type="chain" id="PRO_1000130552" description="L-threonine 3-dehydrogenase">
    <location>
        <begin position="1"/>
        <end position="341"/>
    </location>
</feature>
<feature type="active site" description="Charge relay system" evidence="1">
    <location>
        <position position="40"/>
    </location>
</feature>
<feature type="active site" description="Charge relay system" evidence="1">
    <location>
        <position position="43"/>
    </location>
</feature>
<feature type="binding site" evidence="1">
    <location>
        <position position="38"/>
    </location>
    <ligand>
        <name>Zn(2+)</name>
        <dbReference type="ChEBI" id="CHEBI:29105"/>
        <label>1</label>
        <note>catalytic</note>
    </ligand>
</feature>
<feature type="binding site" evidence="1">
    <location>
        <position position="63"/>
    </location>
    <ligand>
        <name>Zn(2+)</name>
        <dbReference type="ChEBI" id="CHEBI:29105"/>
        <label>1</label>
        <note>catalytic</note>
    </ligand>
</feature>
<feature type="binding site" evidence="1">
    <location>
        <position position="64"/>
    </location>
    <ligand>
        <name>Zn(2+)</name>
        <dbReference type="ChEBI" id="CHEBI:29105"/>
        <label>1</label>
        <note>catalytic</note>
    </ligand>
</feature>
<feature type="binding site" evidence="1">
    <location>
        <position position="93"/>
    </location>
    <ligand>
        <name>Zn(2+)</name>
        <dbReference type="ChEBI" id="CHEBI:29105"/>
        <label>2</label>
    </ligand>
</feature>
<feature type="binding site" evidence="1">
    <location>
        <position position="96"/>
    </location>
    <ligand>
        <name>Zn(2+)</name>
        <dbReference type="ChEBI" id="CHEBI:29105"/>
        <label>2</label>
    </ligand>
</feature>
<feature type="binding site" evidence="1">
    <location>
        <position position="99"/>
    </location>
    <ligand>
        <name>Zn(2+)</name>
        <dbReference type="ChEBI" id="CHEBI:29105"/>
        <label>2</label>
    </ligand>
</feature>
<feature type="binding site" evidence="1">
    <location>
        <position position="107"/>
    </location>
    <ligand>
        <name>Zn(2+)</name>
        <dbReference type="ChEBI" id="CHEBI:29105"/>
        <label>2</label>
    </ligand>
</feature>
<feature type="binding site" evidence="1">
    <location>
        <position position="175"/>
    </location>
    <ligand>
        <name>NAD(+)</name>
        <dbReference type="ChEBI" id="CHEBI:57540"/>
    </ligand>
</feature>
<feature type="binding site" evidence="1">
    <location>
        <position position="195"/>
    </location>
    <ligand>
        <name>NAD(+)</name>
        <dbReference type="ChEBI" id="CHEBI:57540"/>
    </ligand>
</feature>
<feature type="binding site" evidence="1">
    <location>
        <position position="200"/>
    </location>
    <ligand>
        <name>NAD(+)</name>
        <dbReference type="ChEBI" id="CHEBI:57540"/>
    </ligand>
</feature>
<feature type="binding site" evidence="1">
    <location>
        <begin position="262"/>
        <end position="264"/>
    </location>
    <ligand>
        <name>NAD(+)</name>
        <dbReference type="ChEBI" id="CHEBI:57540"/>
    </ligand>
</feature>
<feature type="binding site" evidence="1">
    <location>
        <begin position="286"/>
        <end position="287"/>
    </location>
    <ligand>
        <name>NAD(+)</name>
        <dbReference type="ChEBI" id="CHEBI:57540"/>
    </ligand>
</feature>
<feature type="site" description="Important for catalytic activity for the proton relay mechanism but does not participate directly in the coordination of zinc atom" evidence="1">
    <location>
        <position position="148"/>
    </location>
</feature>
<dbReference type="EC" id="1.1.1.103" evidence="1"/>
<dbReference type="EMBL" id="CU928158">
    <property type="protein sequence ID" value="CAQ91340.1"/>
    <property type="molecule type" value="Genomic_DNA"/>
</dbReference>
<dbReference type="RefSeq" id="WP_000645979.1">
    <property type="nucleotide sequence ID" value="NC_011740.1"/>
</dbReference>
<dbReference type="SMR" id="B7LVH6"/>
<dbReference type="GeneID" id="75059498"/>
<dbReference type="KEGG" id="efe:EFER_3906"/>
<dbReference type="HOGENOM" id="CLU_026673_11_0_6"/>
<dbReference type="OrthoDB" id="9773078at2"/>
<dbReference type="UniPathway" id="UPA00046">
    <property type="reaction ID" value="UER00505"/>
</dbReference>
<dbReference type="Proteomes" id="UP000000745">
    <property type="component" value="Chromosome"/>
</dbReference>
<dbReference type="GO" id="GO:0005737">
    <property type="term" value="C:cytoplasm"/>
    <property type="evidence" value="ECO:0007669"/>
    <property type="project" value="UniProtKB-SubCell"/>
</dbReference>
<dbReference type="GO" id="GO:0008743">
    <property type="term" value="F:L-threonine 3-dehydrogenase activity"/>
    <property type="evidence" value="ECO:0007669"/>
    <property type="project" value="UniProtKB-UniRule"/>
</dbReference>
<dbReference type="GO" id="GO:0008270">
    <property type="term" value="F:zinc ion binding"/>
    <property type="evidence" value="ECO:0007669"/>
    <property type="project" value="UniProtKB-UniRule"/>
</dbReference>
<dbReference type="GO" id="GO:0019518">
    <property type="term" value="P:L-threonine catabolic process to glycine"/>
    <property type="evidence" value="ECO:0007669"/>
    <property type="project" value="UniProtKB-UniPathway"/>
</dbReference>
<dbReference type="FunFam" id="3.40.50.720:FF:000059">
    <property type="entry name" value="L-threonine 3-dehydrogenase"/>
    <property type="match status" value="1"/>
</dbReference>
<dbReference type="Gene3D" id="3.90.180.10">
    <property type="entry name" value="Medium-chain alcohol dehydrogenases, catalytic domain"/>
    <property type="match status" value="1"/>
</dbReference>
<dbReference type="Gene3D" id="3.40.50.720">
    <property type="entry name" value="NAD(P)-binding Rossmann-like Domain"/>
    <property type="match status" value="1"/>
</dbReference>
<dbReference type="HAMAP" id="MF_00627">
    <property type="entry name" value="Thr_dehydrog"/>
    <property type="match status" value="1"/>
</dbReference>
<dbReference type="InterPro" id="IPR013149">
    <property type="entry name" value="ADH-like_C"/>
</dbReference>
<dbReference type="InterPro" id="IPR013154">
    <property type="entry name" value="ADH-like_N"/>
</dbReference>
<dbReference type="InterPro" id="IPR002328">
    <property type="entry name" value="ADH_Zn_CS"/>
</dbReference>
<dbReference type="InterPro" id="IPR011032">
    <property type="entry name" value="GroES-like_sf"/>
</dbReference>
<dbReference type="InterPro" id="IPR004627">
    <property type="entry name" value="L-Threonine_3-DHase"/>
</dbReference>
<dbReference type="InterPro" id="IPR036291">
    <property type="entry name" value="NAD(P)-bd_dom_sf"/>
</dbReference>
<dbReference type="InterPro" id="IPR020843">
    <property type="entry name" value="PKS_ER"/>
</dbReference>
<dbReference type="InterPro" id="IPR050129">
    <property type="entry name" value="Zn_alcohol_dh"/>
</dbReference>
<dbReference type="NCBIfam" id="NF003808">
    <property type="entry name" value="PRK05396.1"/>
    <property type="match status" value="1"/>
</dbReference>
<dbReference type="NCBIfam" id="TIGR00692">
    <property type="entry name" value="tdh"/>
    <property type="match status" value="1"/>
</dbReference>
<dbReference type="PANTHER" id="PTHR43401">
    <property type="entry name" value="L-THREONINE 3-DEHYDROGENASE"/>
    <property type="match status" value="1"/>
</dbReference>
<dbReference type="PANTHER" id="PTHR43401:SF2">
    <property type="entry name" value="L-THREONINE 3-DEHYDROGENASE"/>
    <property type="match status" value="1"/>
</dbReference>
<dbReference type="Pfam" id="PF08240">
    <property type="entry name" value="ADH_N"/>
    <property type="match status" value="1"/>
</dbReference>
<dbReference type="Pfam" id="PF00107">
    <property type="entry name" value="ADH_zinc_N"/>
    <property type="match status" value="1"/>
</dbReference>
<dbReference type="SMART" id="SM00829">
    <property type="entry name" value="PKS_ER"/>
    <property type="match status" value="1"/>
</dbReference>
<dbReference type="SUPFAM" id="SSF50129">
    <property type="entry name" value="GroES-like"/>
    <property type="match status" value="1"/>
</dbReference>
<dbReference type="SUPFAM" id="SSF51735">
    <property type="entry name" value="NAD(P)-binding Rossmann-fold domains"/>
    <property type="match status" value="1"/>
</dbReference>
<dbReference type="PROSITE" id="PS00059">
    <property type="entry name" value="ADH_ZINC"/>
    <property type="match status" value="1"/>
</dbReference>
<comment type="function">
    <text evidence="1">Catalyzes the NAD(+)-dependent oxidation of L-threonine to 2-amino-3-ketobutyrate.</text>
</comment>
<comment type="catalytic activity">
    <reaction evidence="1">
        <text>L-threonine + NAD(+) = (2S)-2-amino-3-oxobutanoate + NADH + H(+)</text>
        <dbReference type="Rhea" id="RHEA:13161"/>
        <dbReference type="ChEBI" id="CHEBI:15378"/>
        <dbReference type="ChEBI" id="CHEBI:57540"/>
        <dbReference type="ChEBI" id="CHEBI:57926"/>
        <dbReference type="ChEBI" id="CHEBI:57945"/>
        <dbReference type="ChEBI" id="CHEBI:78948"/>
        <dbReference type="EC" id="1.1.1.103"/>
    </reaction>
</comment>
<comment type="cofactor">
    <cofactor evidence="1">
        <name>Zn(2+)</name>
        <dbReference type="ChEBI" id="CHEBI:29105"/>
    </cofactor>
    <text evidence="1">Binds 2 Zn(2+) ions per subunit.</text>
</comment>
<comment type="pathway">
    <text evidence="1">Amino-acid degradation; L-threonine degradation via oxydo-reductase pathway; glycine from L-threonine: step 1/2.</text>
</comment>
<comment type="subunit">
    <text evidence="1">Homotetramer.</text>
</comment>
<comment type="subcellular location">
    <subcellularLocation>
        <location evidence="1">Cytoplasm</location>
    </subcellularLocation>
</comment>
<comment type="similarity">
    <text evidence="1">Belongs to the zinc-containing alcohol dehydrogenase family.</text>
</comment>
<evidence type="ECO:0000255" key="1">
    <source>
        <dbReference type="HAMAP-Rule" id="MF_00627"/>
    </source>
</evidence>
<gene>
    <name evidence="1" type="primary">tdh</name>
    <name type="ordered locus">EFER_3906</name>
</gene>
<keyword id="KW-0963">Cytoplasm</keyword>
<keyword id="KW-0479">Metal-binding</keyword>
<keyword id="KW-0520">NAD</keyword>
<keyword id="KW-0560">Oxidoreductase</keyword>
<keyword id="KW-0862">Zinc</keyword>